<feature type="initiator methionine" description="Removed" evidence="1">
    <location>
        <position position="1"/>
    </location>
</feature>
<feature type="chain" id="PRO_0000170891" description="Formamidopyrimidine-DNA glycosylase">
    <location>
        <begin position="2"/>
        <end position="270"/>
    </location>
</feature>
<feature type="zinc finger region" description="FPG-type">
    <location>
        <begin position="237"/>
        <end position="270"/>
    </location>
</feature>
<feature type="active site" description="Schiff-base intermediate with DNA" evidence="1">
    <location>
        <position position="2"/>
    </location>
</feature>
<feature type="active site" description="Proton donor" evidence="1">
    <location>
        <position position="3"/>
    </location>
</feature>
<feature type="active site" description="Proton donor; for beta-elimination activity" evidence="1">
    <location>
        <position position="58"/>
    </location>
</feature>
<feature type="active site" description="Proton donor; for delta-elimination activity" evidence="1">
    <location>
        <position position="260"/>
    </location>
</feature>
<feature type="binding site" evidence="1">
    <location>
        <position position="90"/>
    </location>
    <ligand>
        <name>DNA</name>
        <dbReference type="ChEBI" id="CHEBI:16991"/>
    </ligand>
</feature>
<feature type="binding site" evidence="1">
    <location>
        <position position="109"/>
    </location>
    <ligand>
        <name>DNA</name>
        <dbReference type="ChEBI" id="CHEBI:16991"/>
    </ligand>
</feature>
<feature type="sequence conflict" description="In Ref. 1; AAD21547." evidence="2" ref="1">
    <original>KK</original>
    <variation>RE</variation>
    <location>
        <begin position="157"/>
        <end position="158"/>
    </location>
</feature>
<keyword id="KW-0227">DNA damage</keyword>
<keyword id="KW-0234">DNA repair</keyword>
<keyword id="KW-0238">DNA-binding</keyword>
<keyword id="KW-0326">Glycosidase</keyword>
<keyword id="KW-0378">Hydrolase</keyword>
<keyword id="KW-0456">Lyase</keyword>
<keyword id="KW-0479">Metal-binding</keyword>
<keyword id="KW-0511">Multifunctional enzyme</keyword>
<keyword id="KW-1185">Reference proteome</keyword>
<keyword id="KW-0862">Zinc</keyword>
<keyword id="KW-0863">Zinc-finger</keyword>
<gene>
    <name type="primary">mutM</name>
    <name type="synonym">fpg</name>
    <name type="ordered locus">ZMO1187</name>
</gene>
<protein>
    <recommendedName>
        <fullName>Formamidopyrimidine-DNA glycosylase</fullName>
        <shortName>Fapy-DNA glycosylase</shortName>
        <ecNumber>3.2.2.23</ecNumber>
    </recommendedName>
    <alternativeName>
        <fullName>DNA-(apurinic or apyrimidinic site) lyase MutM</fullName>
        <shortName>AP lyase MutM</shortName>
        <ecNumber>4.2.99.18</ecNumber>
    </alternativeName>
</protein>
<reference key="1">
    <citation type="submission" date="1998-08" db="EMBL/GenBank/DDBJ databases">
        <authorList>
            <person name="Lee H.J."/>
            <person name="Kang H.S."/>
        </authorList>
    </citation>
    <scope>NUCLEOTIDE SEQUENCE [GENOMIC DNA]</scope>
    <source>
        <strain>ATCC 31821 / ZM4 / CP4</strain>
    </source>
</reference>
<reference key="2">
    <citation type="journal article" date="2005" name="Nat. Biotechnol.">
        <title>The genome sequence of the ethanologenic bacterium Zymomonas mobilis ZM4.</title>
        <authorList>
            <person name="Seo J.-S."/>
            <person name="Chong H."/>
            <person name="Park H.S."/>
            <person name="Yoon K.-O."/>
            <person name="Jung C."/>
            <person name="Kim J.J."/>
            <person name="Hong J.H."/>
            <person name="Kim H."/>
            <person name="Kim J.-H."/>
            <person name="Kil J.-I."/>
            <person name="Park C.J."/>
            <person name="Oh H.-M."/>
            <person name="Lee J.-S."/>
            <person name="Jin S.-J."/>
            <person name="Um H.-W."/>
            <person name="Lee H.-J."/>
            <person name="Oh S.-J."/>
            <person name="Kim J.Y."/>
            <person name="Kang H.L."/>
            <person name="Lee S.Y."/>
            <person name="Lee K.J."/>
            <person name="Kang H.S."/>
        </authorList>
    </citation>
    <scope>NUCLEOTIDE SEQUENCE [LARGE SCALE GENOMIC DNA]</scope>
    <source>
        <strain>ATCC 31821 / ZM4 / CP4</strain>
    </source>
</reference>
<organism>
    <name type="scientific">Zymomonas mobilis subsp. mobilis (strain ATCC 31821 / ZM4 / CP4)</name>
    <dbReference type="NCBI Taxonomy" id="264203"/>
    <lineage>
        <taxon>Bacteria</taxon>
        <taxon>Pseudomonadati</taxon>
        <taxon>Pseudomonadota</taxon>
        <taxon>Alphaproteobacteria</taxon>
        <taxon>Sphingomonadales</taxon>
        <taxon>Zymomonadaceae</taxon>
        <taxon>Zymomonas</taxon>
    </lineage>
</organism>
<proteinExistence type="inferred from homology"/>
<comment type="function">
    <text evidence="1">Involved in base excision repair of DNA damaged by oxidation or by mutagenic agents. Acts as a DNA glycosylase that recognizes and removes damaged bases. Has a preference for oxidized purines, such as 7,8-dihydro-8-oxoguanine (8-oxoG). Has AP (apurinic/apyrimidinic) lyase activity and introduces nicks in the DNA strand. Cleaves the DNA backbone by beta-delta elimination to generate a single-strand break at the site of the removed base with both 3'- and 5'-phosphates (By similarity).</text>
</comment>
<comment type="catalytic activity">
    <reaction>
        <text>Hydrolysis of DNA containing ring-opened 7-methylguanine residues, releasing 2,6-diamino-4-hydroxy-5-(N-methyl)formamidopyrimidine.</text>
        <dbReference type="EC" id="3.2.2.23"/>
    </reaction>
</comment>
<comment type="catalytic activity">
    <reaction>
        <text>2'-deoxyribonucleotide-(2'-deoxyribose 5'-phosphate)-2'-deoxyribonucleotide-DNA = a 3'-end 2'-deoxyribonucleotide-(2,3-dehydro-2,3-deoxyribose 5'-phosphate)-DNA + a 5'-end 5'-phospho-2'-deoxyribonucleoside-DNA + H(+)</text>
        <dbReference type="Rhea" id="RHEA:66592"/>
        <dbReference type="Rhea" id="RHEA-COMP:13180"/>
        <dbReference type="Rhea" id="RHEA-COMP:16897"/>
        <dbReference type="Rhea" id="RHEA-COMP:17067"/>
        <dbReference type="ChEBI" id="CHEBI:15378"/>
        <dbReference type="ChEBI" id="CHEBI:136412"/>
        <dbReference type="ChEBI" id="CHEBI:157695"/>
        <dbReference type="ChEBI" id="CHEBI:167181"/>
        <dbReference type="EC" id="4.2.99.18"/>
    </reaction>
</comment>
<comment type="cofactor">
    <cofactor evidence="1">
        <name>Zn(2+)</name>
        <dbReference type="ChEBI" id="CHEBI:29105"/>
    </cofactor>
    <text evidence="1">Binds 1 zinc ion per subunit.</text>
</comment>
<comment type="subunit">
    <text evidence="1">Monomer.</text>
</comment>
<comment type="similarity">
    <text evidence="2">Belongs to the FPG family.</text>
</comment>
<comment type="sequence caution" evidence="2">
    <conflict type="erroneous initiation">
        <sequence resource="EMBL-CDS" id="AAD21547"/>
    </conflict>
</comment>
<name>FPG_ZYMMO</name>
<accession>Q9X3X1</accession>
<accession>Q5NN99</accession>
<dbReference type="EC" id="3.2.2.23"/>
<dbReference type="EC" id="4.2.99.18"/>
<dbReference type="EMBL" id="AF088896">
    <property type="protein sequence ID" value="AAD21547.1"/>
    <property type="status" value="ALT_INIT"/>
    <property type="molecule type" value="Genomic_DNA"/>
</dbReference>
<dbReference type="EMBL" id="AE008692">
    <property type="protein sequence ID" value="AAV89811.1"/>
    <property type="molecule type" value="Genomic_DNA"/>
</dbReference>
<dbReference type="RefSeq" id="WP_011241010.1">
    <property type="nucleotide sequence ID" value="NZ_CP035711.1"/>
</dbReference>
<dbReference type="SMR" id="Q9X3X1"/>
<dbReference type="STRING" id="264203.ZMO1187"/>
<dbReference type="GeneID" id="79903691"/>
<dbReference type="KEGG" id="zmo:ZMO1187"/>
<dbReference type="eggNOG" id="COG0266">
    <property type="taxonomic scope" value="Bacteria"/>
</dbReference>
<dbReference type="HOGENOM" id="CLU_038423_1_1_5"/>
<dbReference type="Proteomes" id="UP000001173">
    <property type="component" value="Chromosome"/>
</dbReference>
<dbReference type="GO" id="GO:0034039">
    <property type="term" value="F:8-oxo-7,8-dihydroguanine DNA N-glycosylase activity"/>
    <property type="evidence" value="ECO:0007669"/>
    <property type="project" value="TreeGrafter"/>
</dbReference>
<dbReference type="GO" id="GO:0140078">
    <property type="term" value="F:class I DNA-(apurinic or apyrimidinic site) endonuclease activity"/>
    <property type="evidence" value="ECO:0007669"/>
    <property type="project" value="UniProtKB-EC"/>
</dbReference>
<dbReference type="GO" id="GO:0003684">
    <property type="term" value="F:damaged DNA binding"/>
    <property type="evidence" value="ECO:0007669"/>
    <property type="project" value="InterPro"/>
</dbReference>
<dbReference type="GO" id="GO:0008270">
    <property type="term" value="F:zinc ion binding"/>
    <property type="evidence" value="ECO:0007669"/>
    <property type="project" value="UniProtKB-UniRule"/>
</dbReference>
<dbReference type="GO" id="GO:0006284">
    <property type="term" value="P:base-excision repair"/>
    <property type="evidence" value="ECO:0007669"/>
    <property type="project" value="InterPro"/>
</dbReference>
<dbReference type="CDD" id="cd08966">
    <property type="entry name" value="EcFpg-like_N"/>
    <property type="match status" value="1"/>
</dbReference>
<dbReference type="FunFam" id="1.10.8.50:FF:000003">
    <property type="entry name" value="Formamidopyrimidine-DNA glycosylase"/>
    <property type="match status" value="1"/>
</dbReference>
<dbReference type="Gene3D" id="1.10.8.50">
    <property type="match status" value="1"/>
</dbReference>
<dbReference type="Gene3D" id="3.20.190.10">
    <property type="entry name" value="MutM-like, N-terminal"/>
    <property type="match status" value="1"/>
</dbReference>
<dbReference type="HAMAP" id="MF_00103">
    <property type="entry name" value="Fapy_DNA_glycosyl"/>
    <property type="match status" value="1"/>
</dbReference>
<dbReference type="InterPro" id="IPR015886">
    <property type="entry name" value="DNA_glyclase/AP_lyase_DNA-bd"/>
</dbReference>
<dbReference type="InterPro" id="IPR015887">
    <property type="entry name" value="DNA_glyclase_Znf_dom_DNA_BS"/>
</dbReference>
<dbReference type="InterPro" id="IPR020629">
    <property type="entry name" value="Formamido-pyr_DNA_Glyclase"/>
</dbReference>
<dbReference type="InterPro" id="IPR012319">
    <property type="entry name" value="FPG_cat"/>
</dbReference>
<dbReference type="InterPro" id="IPR035937">
    <property type="entry name" value="MutM-like_N-ter"/>
</dbReference>
<dbReference type="InterPro" id="IPR010979">
    <property type="entry name" value="Ribosomal_uS13-like_H2TH"/>
</dbReference>
<dbReference type="InterPro" id="IPR000214">
    <property type="entry name" value="Znf_DNA_glyclase/AP_lyase"/>
</dbReference>
<dbReference type="InterPro" id="IPR010663">
    <property type="entry name" value="Znf_FPG/IleRS"/>
</dbReference>
<dbReference type="NCBIfam" id="TIGR00577">
    <property type="entry name" value="fpg"/>
    <property type="match status" value="1"/>
</dbReference>
<dbReference type="NCBIfam" id="NF002211">
    <property type="entry name" value="PRK01103.1"/>
    <property type="match status" value="1"/>
</dbReference>
<dbReference type="PANTHER" id="PTHR22993">
    <property type="entry name" value="FORMAMIDOPYRIMIDINE-DNA GLYCOSYLASE"/>
    <property type="match status" value="1"/>
</dbReference>
<dbReference type="PANTHER" id="PTHR22993:SF9">
    <property type="entry name" value="FORMAMIDOPYRIMIDINE-DNA GLYCOSYLASE"/>
    <property type="match status" value="1"/>
</dbReference>
<dbReference type="Pfam" id="PF01149">
    <property type="entry name" value="Fapy_DNA_glyco"/>
    <property type="match status" value="1"/>
</dbReference>
<dbReference type="Pfam" id="PF06831">
    <property type="entry name" value="H2TH"/>
    <property type="match status" value="1"/>
</dbReference>
<dbReference type="Pfam" id="PF06827">
    <property type="entry name" value="zf-FPG_IleRS"/>
    <property type="match status" value="1"/>
</dbReference>
<dbReference type="SMART" id="SM00898">
    <property type="entry name" value="Fapy_DNA_glyco"/>
    <property type="match status" value="1"/>
</dbReference>
<dbReference type="SMART" id="SM01232">
    <property type="entry name" value="H2TH"/>
    <property type="match status" value="1"/>
</dbReference>
<dbReference type="SUPFAM" id="SSF57716">
    <property type="entry name" value="Glucocorticoid receptor-like (DNA-binding domain)"/>
    <property type="match status" value="1"/>
</dbReference>
<dbReference type="SUPFAM" id="SSF81624">
    <property type="entry name" value="N-terminal domain of MutM-like DNA repair proteins"/>
    <property type="match status" value="1"/>
</dbReference>
<dbReference type="SUPFAM" id="SSF46946">
    <property type="entry name" value="S13-like H2TH domain"/>
    <property type="match status" value="1"/>
</dbReference>
<dbReference type="PROSITE" id="PS51068">
    <property type="entry name" value="FPG_CAT"/>
    <property type="match status" value="1"/>
</dbReference>
<dbReference type="PROSITE" id="PS01242">
    <property type="entry name" value="ZF_FPG_1"/>
    <property type="match status" value="1"/>
</dbReference>
<dbReference type="PROSITE" id="PS51066">
    <property type="entry name" value="ZF_FPG_2"/>
    <property type="match status" value="1"/>
</dbReference>
<sequence length="270" mass="30664">MPELPEVETTIRGLSEVLMGEKIIDVKVRRASLRRPIPSDIQERLIGSTIISLSRRAKYGIIVNDRDDALIFHLGMSGRWKINPENFEKHDHFVLQTKNNFIVSLYDPRRFGSLDLVKKNQLLEWSYFRNIGPEPLTGNFNPEYLQKKLFSSSAPIKKILLDQKVVAGIGNIYACEALHQAKIHPQRPSKNLNFDEITSLVFSIKNILQKAIAEGGSTLKDYARPNGELGYFSTKFKVYGKEGEQCECGHTIERYTLGGRSTFLCSSCQK</sequence>
<evidence type="ECO:0000250" key="1"/>
<evidence type="ECO:0000305" key="2"/>